<sequence>MARKALKLASWTSVALAASGVYLYSNNYLDPNDFGAVRVGRAVATTAVISYDYLTSLRSVPYGSEEYLQRRSQVHLRSARRLFELCCANRGTFIKVGQHLGALDYLLPEEYTSTLKVLHSQAPQSSMQEVRQVIREDLGKEIHDLFLSFDDTPLGAASLAQVHKAVLHDGRTVAVKVQHPKVQAQSSKDILLMEVLVLAVKQLFPDFEFMWLVDEAKKNLPLELDFLNEGRNAEKVAHMLRHFDFLKVPQIHWELSTKRVLLMEFVEGGQVNDRAYMEKNQIDVNEISCHLGKMYSEMIFVNGFVHCDPHPGNVLVRKRPDTGKAEIVLLDHGLYQVLTEEFRLDYCHLWQSLIWTDMDGLKQYSQRLGAADLYPLFACMLTARSWDSVKQGIGQAPVSATEDSEIRNNAACYLPEISQLLNHVPRQMLLILKTNDLLRSIETTLGTRSSASSFLNMSRCCIRALAEHKKRDAGSFFRRTQISFSEAFSLWQINLHELLLRVRALRLACWVSALLGWLTRAPHRM</sequence>
<gene>
    <name type="primary">Adck1</name>
</gene>
<dbReference type="EC" id="2.7.-.-" evidence="2"/>
<dbReference type="EMBL" id="AK011310">
    <property type="protein sequence ID" value="BAB27536.1"/>
    <property type="molecule type" value="mRNA"/>
</dbReference>
<dbReference type="EMBL" id="AK050868">
    <property type="protein sequence ID" value="BAC34439.1"/>
    <property type="molecule type" value="mRNA"/>
</dbReference>
<dbReference type="EMBL" id="AK145987">
    <property type="protein sequence ID" value="BAE26809.1"/>
    <property type="molecule type" value="mRNA"/>
</dbReference>
<dbReference type="EMBL" id="AK154839">
    <property type="protein sequence ID" value="BAE32867.1"/>
    <property type="molecule type" value="mRNA"/>
</dbReference>
<dbReference type="EMBL" id="BC010539">
    <property type="protein sequence ID" value="AAH10539.1"/>
    <property type="molecule type" value="mRNA"/>
</dbReference>
<dbReference type="CCDS" id="CCDS26087.1">
    <molecule id="Q9D0L4-1"/>
</dbReference>
<dbReference type="RefSeq" id="NP_001264225.1">
    <molecule id="Q9D0L4-1"/>
    <property type="nucleotide sequence ID" value="NM_001277296.1"/>
</dbReference>
<dbReference type="RefSeq" id="NP_001264226.1">
    <molecule id="Q9D0L4-1"/>
    <property type="nucleotide sequence ID" value="NM_001277297.1"/>
</dbReference>
<dbReference type="RefSeq" id="NP_082381.1">
    <molecule id="Q9D0L4-1"/>
    <property type="nucleotide sequence ID" value="NM_028105.4"/>
</dbReference>
<dbReference type="RefSeq" id="XP_030102800.1">
    <molecule id="Q9D0L4-2"/>
    <property type="nucleotide sequence ID" value="XM_030246940.2"/>
</dbReference>
<dbReference type="SMR" id="Q9D0L4"/>
<dbReference type="BioGRID" id="215160">
    <property type="interactions" value="4"/>
</dbReference>
<dbReference type="FunCoup" id="Q9D0L4">
    <property type="interactions" value="1995"/>
</dbReference>
<dbReference type="STRING" id="10090.ENSMUSP00000152821"/>
<dbReference type="GlyGen" id="Q9D0L4">
    <property type="glycosylation" value="2 sites, 1 N-linked glycan (1 site), 1 O-linked glycan (1 site)"/>
</dbReference>
<dbReference type="iPTMnet" id="Q9D0L4"/>
<dbReference type="PhosphoSitePlus" id="Q9D0L4"/>
<dbReference type="SwissPalm" id="Q9D0L4"/>
<dbReference type="PaxDb" id="10090-ENSMUSP00000127254"/>
<dbReference type="PeptideAtlas" id="Q9D0L4"/>
<dbReference type="ProteomicsDB" id="285677">
    <molecule id="Q9D0L4-1"/>
</dbReference>
<dbReference type="ProteomicsDB" id="285678">
    <molecule id="Q9D0L4-2"/>
</dbReference>
<dbReference type="Pumba" id="Q9D0L4"/>
<dbReference type="Antibodypedia" id="26131">
    <property type="antibodies" value="181 antibodies from 28 providers"/>
</dbReference>
<dbReference type="DNASU" id="72113"/>
<dbReference type="Ensembl" id="ENSMUST00000101165.9">
    <molecule id="Q9D0L4-1"/>
    <property type="protein sequence ID" value="ENSMUSP00000098724.3"/>
    <property type="gene ID" value="ENSMUSG00000021044.16"/>
</dbReference>
<dbReference type="Ensembl" id="ENSMUST00000166940.3">
    <molecule id="Q9D0L4-1"/>
    <property type="protein sequence ID" value="ENSMUSP00000127254.2"/>
    <property type="gene ID" value="ENSMUSG00000021044.16"/>
</dbReference>
<dbReference type="Ensembl" id="ENSMUST00000222695.2">
    <molecule id="Q9D0L4-1"/>
    <property type="protein sequence ID" value="ENSMUSP00000152821.2"/>
    <property type="gene ID" value="ENSMUSG00000021044.16"/>
</dbReference>
<dbReference type="GeneID" id="72113"/>
<dbReference type="KEGG" id="mmu:72113"/>
<dbReference type="UCSC" id="uc007oju.2">
    <molecule id="Q9D0L4-1"/>
    <property type="organism name" value="mouse"/>
</dbReference>
<dbReference type="AGR" id="MGI:1919363"/>
<dbReference type="CTD" id="57143"/>
<dbReference type="MGI" id="MGI:1919363">
    <property type="gene designation" value="Adck1"/>
</dbReference>
<dbReference type="VEuPathDB" id="HostDB:ENSMUSG00000021044"/>
<dbReference type="eggNOG" id="KOG1235">
    <property type="taxonomic scope" value="Eukaryota"/>
</dbReference>
<dbReference type="GeneTree" id="ENSGT00940000158221"/>
<dbReference type="HOGENOM" id="CLU_006533_2_0_1"/>
<dbReference type="InParanoid" id="Q9D0L4"/>
<dbReference type="OMA" id="RCNPEDI"/>
<dbReference type="OrthoDB" id="427480at2759"/>
<dbReference type="PhylomeDB" id="Q9D0L4"/>
<dbReference type="TreeFam" id="TF314889"/>
<dbReference type="BioGRID-ORCS" id="72113">
    <property type="hits" value="3 hits in 80 CRISPR screens"/>
</dbReference>
<dbReference type="ChiTaRS" id="Adck1">
    <property type="organism name" value="mouse"/>
</dbReference>
<dbReference type="PRO" id="PR:Q9D0L4"/>
<dbReference type="Proteomes" id="UP000000589">
    <property type="component" value="Chromosome 12"/>
</dbReference>
<dbReference type="RNAct" id="Q9D0L4">
    <property type="molecule type" value="protein"/>
</dbReference>
<dbReference type="Bgee" id="ENSMUSG00000021044">
    <property type="expression patterns" value="Expressed in saccule of membranous labyrinth and 224 other cell types or tissues"/>
</dbReference>
<dbReference type="GO" id="GO:0005739">
    <property type="term" value="C:mitochondrion"/>
    <property type="evidence" value="ECO:0007005"/>
    <property type="project" value="MGI"/>
</dbReference>
<dbReference type="GO" id="GO:0005524">
    <property type="term" value="F:ATP binding"/>
    <property type="evidence" value="ECO:0007669"/>
    <property type="project" value="UniProtKB-KW"/>
</dbReference>
<dbReference type="GO" id="GO:0004674">
    <property type="term" value="F:protein serine/threonine kinase activity"/>
    <property type="evidence" value="ECO:0007669"/>
    <property type="project" value="UniProtKB-KW"/>
</dbReference>
<dbReference type="GO" id="GO:0010637">
    <property type="term" value="P:negative regulation of mitochondrial fusion"/>
    <property type="evidence" value="ECO:0000250"/>
    <property type="project" value="UniProtKB"/>
</dbReference>
<dbReference type="GO" id="GO:1903852">
    <property type="term" value="P:positive regulation of cristae formation"/>
    <property type="evidence" value="ECO:0000250"/>
    <property type="project" value="UniProtKB"/>
</dbReference>
<dbReference type="CDD" id="cd13969">
    <property type="entry name" value="ADCK1-like"/>
    <property type="match status" value="1"/>
</dbReference>
<dbReference type="Gene3D" id="1.10.510.10">
    <property type="entry name" value="Transferase(Phosphotransferase) domain 1"/>
    <property type="match status" value="1"/>
</dbReference>
<dbReference type="InterPro" id="IPR004147">
    <property type="entry name" value="ABC1_dom"/>
</dbReference>
<dbReference type="InterPro" id="IPR045307">
    <property type="entry name" value="ADCK1_dom"/>
</dbReference>
<dbReference type="InterPro" id="IPR011009">
    <property type="entry name" value="Kinase-like_dom_sf"/>
</dbReference>
<dbReference type="InterPro" id="IPR051130">
    <property type="entry name" value="Mito_struct-func_regulator"/>
</dbReference>
<dbReference type="InterPro" id="IPR000719">
    <property type="entry name" value="Prot_kinase_dom"/>
</dbReference>
<dbReference type="PANTHER" id="PTHR43173:SF19">
    <property type="entry name" value="AARF DOMAIN-CONTAINING PROTEIN KINASE 1"/>
    <property type="match status" value="1"/>
</dbReference>
<dbReference type="PANTHER" id="PTHR43173">
    <property type="entry name" value="ABC1 FAMILY PROTEIN"/>
    <property type="match status" value="1"/>
</dbReference>
<dbReference type="Pfam" id="PF03109">
    <property type="entry name" value="ABC1"/>
    <property type="match status" value="1"/>
</dbReference>
<dbReference type="SUPFAM" id="SSF56112">
    <property type="entry name" value="Protein kinase-like (PK-like)"/>
    <property type="match status" value="1"/>
</dbReference>
<dbReference type="PROSITE" id="PS50011">
    <property type="entry name" value="PROTEIN_KINASE_DOM"/>
    <property type="match status" value="1"/>
</dbReference>
<feature type="transit peptide" description="Mitochondrion" evidence="4">
    <location>
        <begin position="1"/>
        <end status="unknown"/>
    </location>
</feature>
<feature type="chain" id="PRO_0000252250" description="AarF domain-containing protein kinase 1">
    <location>
        <begin status="unknown"/>
        <end position="525"/>
    </location>
</feature>
<feature type="domain" description="Protein kinase" evidence="2">
    <location>
        <begin position="148"/>
        <end position="477"/>
    </location>
</feature>
<feature type="active site" description="Proton acceptor" evidence="2">
    <location>
        <position position="308"/>
    </location>
</feature>
<feature type="binding site" evidence="2">
    <location>
        <begin position="154"/>
        <end position="162"/>
    </location>
    <ligand>
        <name>ATP</name>
        <dbReference type="ChEBI" id="CHEBI:30616"/>
    </ligand>
</feature>
<feature type="binding site" evidence="2">
    <location>
        <position position="176"/>
    </location>
    <ligand>
        <name>ATP</name>
        <dbReference type="ChEBI" id="CHEBI:30616"/>
    </ligand>
</feature>
<feature type="splice variant" id="VSP_020886" description="In isoform 2." evidence="3">
    <location>
        <begin position="1"/>
        <end position="192"/>
    </location>
</feature>
<accession>Q9D0L4</accession>
<accession>Q3UKJ2</accession>
<evidence type="ECO:0000250" key="1">
    <source>
        <dbReference type="UniProtKB" id="Q86TW2"/>
    </source>
</evidence>
<evidence type="ECO:0000255" key="2">
    <source>
        <dbReference type="PROSITE-ProRule" id="PRU00159"/>
    </source>
</evidence>
<evidence type="ECO:0000303" key="3">
    <source>
    </source>
</evidence>
<evidence type="ECO:0000305" key="4"/>
<organism>
    <name type="scientific">Mus musculus</name>
    <name type="common">Mouse</name>
    <dbReference type="NCBI Taxonomy" id="10090"/>
    <lineage>
        <taxon>Eukaryota</taxon>
        <taxon>Metazoa</taxon>
        <taxon>Chordata</taxon>
        <taxon>Craniata</taxon>
        <taxon>Vertebrata</taxon>
        <taxon>Euteleostomi</taxon>
        <taxon>Mammalia</taxon>
        <taxon>Eutheria</taxon>
        <taxon>Euarchontoglires</taxon>
        <taxon>Glires</taxon>
        <taxon>Rodentia</taxon>
        <taxon>Myomorpha</taxon>
        <taxon>Muroidea</taxon>
        <taxon>Muridae</taxon>
        <taxon>Murinae</taxon>
        <taxon>Mus</taxon>
        <taxon>Mus</taxon>
    </lineage>
</organism>
<name>ADCK1_MOUSE</name>
<reference key="1">
    <citation type="journal article" date="2005" name="Science">
        <title>The transcriptional landscape of the mammalian genome.</title>
        <authorList>
            <person name="Carninci P."/>
            <person name="Kasukawa T."/>
            <person name="Katayama S."/>
            <person name="Gough J."/>
            <person name="Frith M.C."/>
            <person name="Maeda N."/>
            <person name="Oyama R."/>
            <person name="Ravasi T."/>
            <person name="Lenhard B."/>
            <person name="Wells C."/>
            <person name="Kodzius R."/>
            <person name="Shimokawa K."/>
            <person name="Bajic V.B."/>
            <person name="Brenner S.E."/>
            <person name="Batalov S."/>
            <person name="Forrest A.R."/>
            <person name="Zavolan M."/>
            <person name="Davis M.J."/>
            <person name="Wilming L.G."/>
            <person name="Aidinis V."/>
            <person name="Allen J.E."/>
            <person name="Ambesi-Impiombato A."/>
            <person name="Apweiler R."/>
            <person name="Aturaliya R.N."/>
            <person name="Bailey T.L."/>
            <person name="Bansal M."/>
            <person name="Baxter L."/>
            <person name="Beisel K.W."/>
            <person name="Bersano T."/>
            <person name="Bono H."/>
            <person name="Chalk A.M."/>
            <person name="Chiu K.P."/>
            <person name="Choudhary V."/>
            <person name="Christoffels A."/>
            <person name="Clutterbuck D.R."/>
            <person name="Crowe M.L."/>
            <person name="Dalla E."/>
            <person name="Dalrymple B.P."/>
            <person name="de Bono B."/>
            <person name="Della Gatta G."/>
            <person name="di Bernardo D."/>
            <person name="Down T."/>
            <person name="Engstrom P."/>
            <person name="Fagiolini M."/>
            <person name="Faulkner G."/>
            <person name="Fletcher C.F."/>
            <person name="Fukushima T."/>
            <person name="Furuno M."/>
            <person name="Futaki S."/>
            <person name="Gariboldi M."/>
            <person name="Georgii-Hemming P."/>
            <person name="Gingeras T.R."/>
            <person name="Gojobori T."/>
            <person name="Green R.E."/>
            <person name="Gustincich S."/>
            <person name="Harbers M."/>
            <person name="Hayashi Y."/>
            <person name="Hensch T.K."/>
            <person name="Hirokawa N."/>
            <person name="Hill D."/>
            <person name="Huminiecki L."/>
            <person name="Iacono M."/>
            <person name="Ikeo K."/>
            <person name="Iwama A."/>
            <person name="Ishikawa T."/>
            <person name="Jakt M."/>
            <person name="Kanapin A."/>
            <person name="Katoh M."/>
            <person name="Kawasawa Y."/>
            <person name="Kelso J."/>
            <person name="Kitamura H."/>
            <person name="Kitano H."/>
            <person name="Kollias G."/>
            <person name="Krishnan S.P."/>
            <person name="Kruger A."/>
            <person name="Kummerfeld S.K."/>
            <person name="Kurochkin I.V."/>
            <person name="Lareau L.F."/>
            <person name="Lazarevic D."/>
            <person name="Lipovich L."/>
            <person name="Liu J."/>
            <person name="Liuni S."/>
            <person name="McWilliam S."/>
            <person name="Madan Babu M."/>
            <person name="Madera M."/>
            <person name="Marchionni L."/>
            <person name="Matsuda H."/>
            <person name="Matsuzawa S."/>
            <person name="Miki H."/>
            <person name="Mignone F."/>
            <person name="Miyake S."/>
            <person name="Morris K."/>
            <person name="Mottagui-Tabar S."/>
            <person name="Mulder N."/>
            <person name="Nakano N."/>
            <person name="Nakauchi H."/>
            <person name="Ng P."/>
            <person name="Nilsson R."/>
            <person name="Nishiguchi S."/>
            <person name="Nishikawa S."/>
            <person name="Nori F."/>
            <person name="Ohara O."/>
            <person name="Okazaki Y."/>
            <person name="Orlando V."/>
            <person name="Pang K.C."/>
            <person name="Pavan W.J."/>
            <person name="Pavesi G."/>
            <person name="Pesole G."/>
            <person name="Petrovsky N."/>
            <person name="Piazza S."/>
            <person name="Reed J."/>
            <person name="Reid J.F."/>
            <person name="Ring B.Z."/>
            <person name="Ringwald M."/>
            <person name="Rost B."/>
            <person name="Ruan Y."/>
            <person name="Salzberg S.L."/>
            <person name="Sandelin A."/>
            <person name="Schneider C."/>
            <person name="Schoenbach C."/>
            <person name="Sekiguchi K."/>
            <person name="Semple C.A."/>
            <person name="Seno S."/>
            <person name="Sessa L."/>
            <person name="Sheng Y."/>
            <person name="Shibata Y."/>
            <person name="Shimada H."/>
            <person name="Shimada K."/>
            <person name="Silva D."/>
            <person name="Sinclair B."/>
            <person name="Sperling S."/>
            <person name="Stupka E."/>
            <person name="Sugiura K."/>
            <person name="Sultana R."/>
            <person name="Takenaka Y."/>
            <person name="Taki K."/>
            <person name="Tammoja K."/>
            <person name="Tan S.L."/>
            <person name="Tang S."/>
            <person name="Taylor M.S."/>
            <person name="Tegner J."/>
            <person name="Teichmann S.A."/>
            <person name="Ueda H.R."/>
            <person name="van Nimwegen E."/>
            <person name="Verardo R."/>
            <person name="Wei C.L."/>
            <person name="Yagi K."/>
            <person name="Yamanishi H."/>
            <person name="Zabarovsky E."/>
            <person name="Zhu S."/>
            <person name="Zimmer A."/>
            <person name="Hide W."/>
            <person name="Bult C."/>
            <person name="Grimmond S.M."/>
            <person name="Teasdale R.D."/>
            <person name="Liu E.T."/>
            <person name="Brusic V."/>
            <person name="Quackenbush J."/>
            <person name="Wahlestedt C."/>
            <person name="Mattick J.S."/>
            <person name="Hume D.A."/>
            <person name="Kai C."/>
            <person name="Sasaki D."/>
            <person name="Tomaru Y."/>
            <person name="Fukuda S."/>
            <person name="Kanamori-Katayama M."/>
            <person name="Suzuki M."/>
            <person name="Aoki J."/>
            <person name="Arakawa T."/>
            <person name="Iida J."/>
            <person name="Imamura K."/>
            <person name="Itoh M."/>
            <person name="Kato T."/>
            <person name="Kawaji H."/>
            <person name="Kawagashira N."/>
            <person name="Kawashima T."/>
            <person name="Kojima M."/>
            <person name="Kondo S."/>
            <person name="Konno H."/>
            <person name="Nakano K."/>
            <person name="Ninomiya N."/>
            <person name="Nishio T."/>
            <person name="Okada M."/>
            <person name="Plessy C."/>
            <person name="Shibata K."/>
            <person name="Shiraki T."/>
            <person name="Suzuki S."/>
            <person name="Tagami M."/>
            <person name="Waki K."/>
            <person name="Watahiki A."/>
            <person name="Okamura-Oho Y."/>
            <person name="Suzuki H."/>
            <person name="Kawai J."/>
            <person name="Hayashizaki Y."/>
        </authorList>
    </citation>
    <scope>NUCLEOTIDE SEQUENCE [LARGE SCALE MRNA] (ISOFORMS 1 AND 2)</scope>
    <source>
        <strain>C57BL/6J</strain>
        <strain>NOD</strain>
        <tissue>Placenta</tissue>
    </source>
</reference>
<reference key="2">
    <citation type="journal article" date="2004" name="Genome Res.">
        <title>The status, quality, and expansion of the NIH full-length cDNA project: the Mammalian Gene Collection (MGC).</title>
        <authorList>
            <consortium name="The MGC Project Team"/>
        </authorList>
    </citation>
    <scope>NUCLEOTIDE SEQUENCE [LARGE SCALE MRNA] (ISOFORM 1)</scope>
    <source>
        <strain>FVB/N</strain>
        <tissue>Liver</tissue>
    </source>
</reference>
<reference key="3">
    <citation type="journal article" date="2010" name="Cell">
        <title>A tissue-specific atlas of mouse protein phosphorylation and expression.</title>
        <authorList>
            <person name="Huttlin E.L."/>
            <person name="Jedrychowski M.P."/>
            <person name="Elias J.E."/>
            <person name="Goswami T."/>
            <person name="Rad R."/>
            <person name="Beausoleil S.A."/>
            <person name="Villen J."/>
            <person name="Haas W."/>
            <person name="Sowa M.E."/>
            <person name="Gygi S.P."/>
        </authorList>
    </citation>
    <scope>IDENTIFICATION BY MASS SPECTROMETRY [LARGE SCALE ANALYSIS]</scope>
    <source>
        <tissue>Brain</tissue>
        <tissue>Brown adipose tissue</tissue>
        <tissue>Heart</tissue>
        <tissue>Kidney</tissue>
        <tissue>Liver</tissue>
        <tissue>Lung</tissue>
        <tissue>Testis</tissue>
    </source>
</reference>
<proteinExistence type="evidence at protein level"/>
<keyword id="KW-0025">Alternative splicing</keyword>
<keyword id="KW-0067">ATP-binding</keyword>
<keyword id="KW-0418">Kinase</keyword>
<keyword id="KW-0496">Mitochondrion</keyword>
<keyword id="KW-0547">Nucleotide-binding</keyword>
<keyword id="KW-1185">Reference proteome</keyword>
<keyword id="KW-0723">Serine/threonine-protein kinase</keyword>
<keyword id="KW-0808">Transferase</keyword>
<keyword id="KW-0809">Transit peptide</keyword>
<comment type="function">
    <text evidence="1 4">Appears to be essential for maintaining mitochondrial cristae formation and mitochondrial function by acting via YME1L1 in a kinase-independent manner to regulate essential mitochondrial structural proteins OPA1 and IMMT (By similarity). The action of this enzyme is not yet clear. It is not known if it has protein kinase activity and what type of substrate it would phosphorylate (Ser, Thr or Tyr) (Probable).</text>
</comment>
<comment type="subcellular location">
    <subcellularLocation>
        <location evidence="1">Mitochondrion</location>
    </subcellularLocation>
</comment>
<comment type="alternative products">
    <event type="alternative splicing"/>
    <isoform>
        <id>Q9D0L4-1</id>
        <name>1</name>
        <sequence type="displayed"/>
    </isoform>
    <isoform>
        <id>Q9D0L4-2</id>
        <name>2</name>
        <sequence type="described" ref="VSP_020886"/>
    </isoform>
</comment>
<comment type="similarity">
    <text evidence="4">Belongs to the protein kinase superfamily. ADCK protein kinase family.</text>
</comment>
<protein>
    <recommendedName>
        <fullName evidence="4">AarF domain-containing protein kinase 1</fullName>
        <ecNumber evidence="2">2.7.-.-</ecNumber>
    </recommendedName>
</protein>